<organismHost>
    <name type="scientific">Homo sapiens</name>
    <name type="common">Human</name>
    <dbReference type="NCBI Taxonomy" id="9606"/>
</organismHost>
<comment type="function">
    <text evidence="2">Serine/threonine protein kinase that plays important roles in several processes including nuclear viral egress, viral replication or regulation of host cell cycle progression. Participates in the acquisition of tegument during virion morphogenesis in the nucleus. Redistributes the host nuclear lamina by phosphorylating cellular Lamins-A/C. Plays a role in viral DNA synthesis by phosphorylating the DNA polymerase processivity factor UL44. Stimulates host cell cycle to support viral DNA synthesis by phosphorylating host retinoblastoma/RB1 protein. Additional substrates have been identified including host EF1D or H2B. Also phosphorylates host SAMHD1 and thereby counteracts its antiviral effect by reducing its dNTP hydrolase activity.</text>
</comment>
<comment type="catalytic activity">
    <reaction evidence="2">
        <text>L-seryl-[protein] + ATP = O-phospho-L-seryl-[protein] + ADP + H(+)</text>
        <dbReference type="Rhea" id="RHEA:17989"/>
        <dbReference type="Rhea" id="RHEA-COMP:9863"/>
        <dbReference type="Rhea" id="RHEA-COMP:11604"/>
        <dbReference type="ChEBI" id="CHEBI:15378"/>
        <dbReference type="ChEBI" id="CHEBI:29999"/>
        <dbReference type="ChEBI" id="CHEBI:30616"/>
        <dbReference type="ChEBI" id="CHEBI:83421"/>
        <dbReference type="ChEBI" id="CHEBI:456216"/>
        <dbReference type="EC" id="2.7.11.1"/>
    </reaction>
</comment>
<comment type="catalytic activity">
    <reaction evidence="2">
        <text>L-threonyl-[protein] + ATP = O-phospho-L-threonyl-[protein] + ADP + H(+)</text>
        <dbReference type="Rhea" id="RHEA:46608"/>
        <dbReference type="Rhea" id="RHEA-COMP:11060"/>
        <dbReference type="Rhea" id="RHEA-COMP:11605"/>
        <dbReference type="ChEBI" id="CHEBI:15378"/>
        <dbReference type="ChEBI" id="CHEBI:30013"/>
        <dbReference type="ChEBI" id="CHEBI:30616"/>
        <dbReference type="ChEBI" id="CHEBI:61977"/>
        <dbReference type="ChEBI" id="CHEBI:456216"/>
        <dbReference type="EC" id="2.7.11.1"/>
    </reaction>
</comment>
<comment type="subunit">
    <text evidence="1">Interacts with UL83.</text>
</comment>
<comment type="subcellular location">
    <subcellularLocation>
        <location evidence="1">Virion</location>
    </subcellularLocation>
</comment>
<comment type="PTM">
    <text evidence="1">Autophosphorylates on serine and threonine residues.</text>
</comment>
<comment type="similarity">
    <text evidence="5">Belongs to the protein kinase superfamily. Tyr protein kinase family. HCMV ganciclovir subfamily.</text>
</comment>
<keyword id="KW-0945">Host-virus interaction</keyword>
<keyword id="KW-0418">Kinase</keyword>
<keyword id="KW-1121">Modulation of host cell cycle by virus</keyword>
<keyword id="KW-1185">Reference proteome</keyword>
<keyword id="KW-0723">Serine/threonine-protein kinase</keyword>
<keyword id="KW-0808">Transferase</keyword>
<keyword id="KW-0946">Virion</keyword>
<protein>
    <recommendedName>
        <fullName>Serine/threonine protein kinase UL97</fullName>
        <ecNumber evidence="2">2.7.11.1</ecNumber>
    </recommendedName>
</protein>
<gene>
    <name type="primary">UL97</name>
</gene>
<organism>
    <name type="scientific">Human cytomegalovirus (strain Merlin)</name>
    <name type="common">HHV-5</name>
    <name type="synonym">Human herpesvirus 5</name>
    <dbReference type="NCBI Taxonomy" id="295027"/>
    <lineage>
        <taxon>Viruses</taxon>
        <taxon>Duplodnaviria</taxon>
        <taxon>Heunggongvirae</taxon>
        <taxon>Peploviricota</taxon>
        <taxon>Herviviricetes</taxon>
        <taxon>Herpesvirales</taxon>
        <taxon>Orthoherpesviridae</taxon>
        <taxon>Betaherpesvirinae</taxon>
        <taxon>Cytomegalovirus</taxon>
        <taxon>Cytomegalovirus humanbeta5</taxon>
        <taxon>Human cytomegalovirus</taxon>
    </lineage>
</organism>
<proteinExistence type="inferred from homology"/>
<name>UL97_HCMVM</name>
<evidence type="ECO:0000250" key="1"/>
<evidence type="ECO:0000250" key="2">
    <source>
        <dbReference type="UniProtKB" id="P16788"/>
    </source>
</evidence>
<evidence type="ECO:0000255" key="3">
    <source>
        <dbReference type="PROSITE-ProRule" id="PRU10028"/>
    </source>
</evidence>
<evidence type="ECO:0000256" key="4">
    <source>
        <dbReference type="SAM" id="MobiDB-lite"/>
    </source>
</evidence>
<evidence type="ECO:0000305" key="5"/>
<dbReference type="EC" id="2.7.11.1" evidence="2"/>
<dbReference type="EMBL" id="AY446894">
    <property type="protein sequence ID" value="AAR31648.1"/>
    <property type="molecule type" value="Genomic_DNA"/>
</dbReference>
<dbReference type="RefSeq" id="YP_081544.1">
    <property type="nucleotide sequence ID" value="NC_006273.2"/>
</dbReference>
<dbReference type="BioGRID" id="1678070">
    <property type="interactions" value="1"/>
</dbReference>
<dbReference type="GeneID" id="3077517"/>
<dbReference type="KEGG" id="vg:3077517"/>
<dbReference type="Reactome" id="R-HSA-9609690">
    <property type="pathway name" value="HCMV Early Events"/>
</dbReference>
<dbReference type="Reactome" id="R-HSA-9610379">
    <property type="pathway name" value="HCMV Late Events"/>
</dbReference>
<dbReference type="Proteomes" id="UP000000938">
    <property type="component" value="Segment"/>
</dbReference>
<dbReference type="GO" id="GO:0019033">
    <property type="term" value="C:viral tegument"/>
    <property type="evidence" value="ECO:0000304"/>
    <property type="project" value="Reactome"/>
</dbReference>
<dbReference type="GO" id="GO:0005524">
    <property type="term" value="F:ATP binding"/>
    <property type="evidence" value="ECO:0007669"/>
    <property type="project" value="InterPro"/>
</dbReference>
<dbReference type="GO" id="GO:0106310">
    <property type="term" value="F:protein serine kinase activity"/>
    <property type="evidence" value="ECO:0007669"/>
    <property type="project" value="RHEA"/>
</dbReference>
<dbReference type="GO" id="GO:0004674">
    <property type="term" value="F:protein serine/threonine kinase activity"/>
    <property type="evidence" value="ECO:0007669"/>
    <property type="project" value="UniProtKB-KW"/>
</dbReference>
<dbReference type="GO" id="GO:0044071">
    <property type="term" value="P:symbiont-mediated perturbation of host cell cycle progression"/>
    <property type="evidence" value="ECO:0007669"/>
    <property type="project" value="UniProtKB-KW"/>
</dbReference>
<dbReference type="GO" id="GO:0016032">
    <property type="term" value="P:viral process"/>
    <property type="evidence" value="ECO:0007669"/>
    <property type="project" value="InterPro"/>
</dbReference>
<dbReference type="Gene3D" id="1.10.510.10">
    <property type="entry name" value="Transferase(Phosphotransferase) domain 1"/>
    <property type="match status" value="1"/>
</dbReference>
<dbReference type="InterPro" id="IPR010615">
    <property type="entry name" value="Herpes_UL97"/>
</dbReference>
<dbReference type="InterPro" id="IPR011009">
    <property type="entry name" value="Kinase-like_dom_sf"/>
</dbReference>
<dbReference type="InterPro" id="IPR008266">
    <property type="entry name" value="Tyr_kinase_AS"/>
</dbReference>
<dbReference type="Pfam" id="PF06734">
    <property type="entry name" value="UL97"/>
    <property type="match status" value="1"/>
</dbReference>
<dbReference type="SUPFAM" id="SSF56112">
    <property type="entry name" value="Protein kinase-like (PK-like)"/>
    <property type="match status" value="1"/>
</dbReference>
<dbReference type="PROSITE" id="PS00107">
    <property type="entry name" value="PROTEIN_KINASE_ATP"/>
    <property type="match status" value="1"/>
</dbReference>
<dbReference type="PROSITE" id="PS00109">
    <property type="entry name" value="PROTEIN_KINASE_TYR"/>
    <property type="match status" value="1"/>
</dbReference>
<reference key="1">
    <citation type="journal article" date="2004" name="J. Gen. Virol.">
        <title>Genetic content of wild-type human cytomegalovirus.</title>
        <authorList>
            <person name="Dolan A."/>
            <person name="Cunningham C."/>
            <person name="Hector R.D."/>
            <person name="Hassan-Walker A.F."/>
            <person name="Lee L."/>
            <person name="Addison C."/>
            <person name="Dargan D.J."/>
            <person name="McGeoch D.J."/>
            <person name="Gatherer D."/>
            <person name="Emery V.C."/>
            <person name="Griffiths P.D."/>
            <person name="Sinzger C."/>
            <person name="McSharry B.P."/>
            <person name="Wilkinson G.W.G."/>
            <person name="Davison A.J."/>
        </authorList>
    </citation>
    <scope>NUCLEOTIDE SEQUENCE [GENOMIC DNA]</scope>
</reference>
<reference key="2">
    <citation type="journal article" date="2010" name="PLoS Pathog.">
        <title>Cyclin-dependent kinase-like function is shared by the beta- and gamma-subset of the conserved herpesvirus protein kinases.</title>
        <authorList>
            <person name="Kuny C.V."/>
            <person name="Chinchilla K."/>
            <person name="Culbertson M.R."/>
            <person name="Kalejta R.F."/>
        </authorList>
    </citation>
    <scope>REVIEW ON FUNCTION</scope>
</reference>
<feature type="chain" id="PRO_0000416707" description="Serine/threonine protein kinase UL97">
    <location>
        <begin position="1"/>
        <end position="707"/>
    </location>
</feature>
<feature type="region of interest" description="Disordered" evidence="4">
    <location>
        <begin position="1"/>
        <end position="32"/>
    </location>
</feature>
<feature type="region of interest" description="Disordered" evidence="4">
    <location>
        <begin position="113"/>
        <end position="147"/>
    </location>
</feature>
<feature type="region of interest" description="Disordered" evidence="4">
    <location>
        <begin position="176"/>
        <end position="199"/>
    </location>
</feature>
<feature type="region of interest" description="Disordered" evidence="4">
    <location>
        <begin position="231"/>
        <end position="264"/>
    </location>
</feature>
<feature type="compositionally biased region" description="Low complexity" evidence="4">
    <location>
        <begin position="1"/>
        <end position="14"/>
    </location>
</feature>
<feature type="compositionally biased region" description="Basic and acidic residues" evidence="4">
    <location>
        <begin position="113"/>
        <end position="127"/>
    </location>
</feature>
<feature type="compositionally biased region" description="Low complexity" evidence="4">
    <location>
        <begin position="178"/>
        <end position="188"/>
    </location>
</feature>
<feature type="active site" description="Proton acceptor" evidence="3">
    <location>
        <position position="456"/>
    </location>
</feature>
<accession>Q6SW46</accession>
<accession>D2K3Q4</accession>
<sequence>MSSALRSRARSASLGTTTQGWDPPPLRRPSRARRRQWMREAAQAAAQAAVQAAQAAAAQVAQAHVDEDEVVDLMTDEAGGGVTTLTTLSSVSTTTVLGHATFSACVRSDVMRDGEKEDAASDKENQRRPVVPSTSSRGSAASGDGYHGLRCRETSAMWSFEYDRDGDVTSVRRALFTGGSDPSDSVSGVRGGRKRPLRPPLVSLARTPLCRRRVGGVDAVLEENDVELRAESQDSAVASGPGRVPQPLSGSSGEESATAVEADSTSHDDVHCTCSNDQIITTSIRGLTCDPRMFLRLTHPELCELSISYLLVYVPKEDDFCHKICYAVDMSDESYRLGQGSFGEVWPLDRYRVVKVARKHSETVLTVWMSGLIRTRAAGEQQQPPSLVGTGVHRGLLTATGCCLLHNVTVHRRFHTDMFHHDQWKLACIDSYRRAFCTLADAIKFLNHQCRVCHFDITPMNVLIDVNPHNPSEIVRAALCDYSLSEPYPDYNERCVAVFQETGTARRIPNCSHRLRECYHPAFRPMPLQKLLICDPHARFPVAGLRRYCMSELSALGNVLGFCLMRLLDRRGLDEVRMGTEALLFKHAGAACRALENGKLTHCSDACLLILAAQMSYGACLLGEHGAALVSHTLRFVEAKMSSCRVRAFRRFYHECSQTMLHEYVRKNVERLLATSDGLYLYNAFRRTTSIICEEDLDGDCRQLFPE</sequence>